<name>MTNA_PETMO</name>
<reference key="1">
    <citation type="submission" date="2007-11" db="EMBL/GenBank/DDBJ databases">
        <title>Complete sequence of Petroga mobilis SJ95.</title>
        <authorList>
            <consortium name="US DOE Joint Genome Institute"/>
            <person name="Copeland A."/>
            <person name="Lucas S."/>
            <person name="Lapidus A."/>
            <person name="Barry K."/>
            <person name="Glavina del Rio T."/>
            <person name="Dalin E."/>
            <person name="Tice H."/>
            <person name="Pitluck S."/>
            <person name="Meincke L."/>
            <person name="Brettin T."/>
            <person name="Bruce D."/>
            <person name="Detter J.C."/>
            <person name="Han C."/>
            <person name="Kuske C.R."/>
            <person name="Schmutz J."/>
            <person name="Larimer F."/>
            <person name="Land M."/>
            <person name="Hauser L."/>
            <person name="Kyrpides N."/>
            <person name="Mikhailova N."/>
            <person name="Noll K."/>
            <person name="Richardson P."/>
        </authorList>
    </citation>
    <scope>NUCLEOTIDE SEQUENCE [LARGE SCALE GENOMIC DNA]</scope>
    <source>
        <strain>DSM 10674 / SJ95</strain>
    </source>
</reference>
<evidence type="ECO:0000255" key="1">
    <source>
        <dbReference type="HAMAP-Rule" id="MF_01678"/>
    </source>
</evidence>
<protein>
    <recommendedName>
        <fullName evidence="1">Methylthioribose-1-phosphate isomerase</fullName>
        <shortName evidence="1">M1Pi</shortName>
        <shortName evidence="1">MTR-1-P isomerase</shortName>
        <ecNumber evidence="1">5.3.1.23</ecNumber>
    </recommendedName>
    <alternativeName>
        <fullName evidence="1">S-methyl-5-thioribose-1-phosphate isomerase</fullName>
    </alternativeName>
</protein>
<gene>
    <name evidence="1" type="primary">mtnA</name>
    <name type="ordered locus">Pmob_0810</name>
</gene>
<feature type="chain" id="PRO_0000357219" description="Methylthioribose-1-phosphate isomerase">
    <location>
        <begin position="1"/>
        <end position="349"/>
    </location>
</feature>
<feature type="active site" description="Proton donor" evidence="1">
    <location>
        <position position="242"/>
    </location>
</feature>
<feature type="binding site" evidence="1">
    <location>
        <begin position="49"/>
        <end position="51"/>
    </location>
    <ligand>
        <name>substrate</name>
    </ligand>
</feature>
<feature type="binding site" evidence="1">
    <location>
        <position position="93"/>
    </location>
    <ligand>
        <name>substrate</name>
    </ligand>
</feature>
<feature type="binding site" evidence="1">
    <location>
        <position position="201"/>
    </location>
    <ligand>
        <name>substrate</name>
    </ligand>
</feature>
<feature type="binding site" evidence="1">
    <location>
        <begin position="252"/>
        <end position="253"/>
    </location>
    <ligand>
        <name>substrate</name>
    </ligand>
</feature>
<feature type="site" description="Transition state stabilizer" evidence="1">
    <location>
        <position position="162"/>
    </location>
</feature>
<comment type="function">
    <text evidence="1">Catalyzes the interconversion of methylthioribose-1-phosphate (MTR-1-P) into methylthioribulose-1-phosphate (MTRu-1-P).</text>
</comment>
<comment type="catalytic activity">
    <reaction evidence="1">
        <text>5-(methylsulfanyl)-alpha-D-ribose 1-phosphate = 5-(methylsulfanyl)-D-ribulose 1-phosphate</text>
        <dbReference type="Rhea" id="RHEA:19989"/>
        <dbReference type="ChEBI" id="CHEBI:58533"/>
        <dbReference type="ChEBI" id="CHEBI:58548"/>
        <dbReference type="EC" id="5.3.1.23"/>
    </reaction>
</comment>
<comment type="pathway">
    <text evidence="1">Amino-acid biosynthesis; L-methionine biosynthesis via salvage pathway; L-methionine from S-methyl-5-thio-alpha-D-ribose 1-phosphate: step 1/6.</text>
</comment>
<comment type="similarity">
    <text evidence="1">Belongs to the EIF-2B alpha/beta/delta subunits family. MtnA subfamily.</text>
</comment>
<proteinExistence type="inferred from homology"/>
<sequence length="349" mass="38765">MKNIKTMTMEWTGNSLILIDQRYLPIEEKYVECQNYLDVANSIKDMVVRGAPAIGATAAFGFVLGAKEFSYLSDKNLFSNKLEEVKNSLSKTRPTAVNLFWALNRMDKILKDNLPTKEINDLVTILEEEALKIAYEDIEINKQIGKNGEALLNDGDTVLTHCNAGALATVDYGTALGVIRAAVENGKDIQVYADETRPYLQGARLTVWELVKSGIKTTLITDNMAGWVMKQGKINAVIVGADRIARNGDVANKIGTYSVAVLAKRHGIPFYVAAPLSTIDIETKNGEGIPIEERNHNEVRFCHKTRLVTDDVNIYNPAFDVTPNELVTAIITEKMVIRPPYEINIVKLF</sequence>
<accession>A9BHC5</accession>
<keyword id="KW-0028">Amino-acid biosynthesis</keyword>
<keyword id="KW-0413">Isomerase</keyword>
<keyword id="KW-0486">Methionine biosynthesis</keyword>
<organism>
    <name type="scientific">Petrotoga mobilis (strain DSM 10674 / SJ95)</name>
    <dbReference type="NCBI Taxonomy" id="403833"/>
    <lineage>
        <taxon>Bacteria</taxon>
        <taxon>Thermotogati</taxon>
        <taxon>Thermotogota</taxon>
        <taxon>Thermotogae</taxon>
        <taxon>Petrotogales</taxon>
        <taxon>Petrotogaceae</taxon>
        <taxon>Petrotoga</taxon>
    </lineage>
</organism>
<dbReference type="EC" id="5.3.1.23" evidence="1"/>
<dbReference type="EMBL" id="CP000879">
    <property type="protein sequence ID" value="ABX31534.1"/>
    <property type="molecule type" value="Genomic_DNA"/>
</dbReference>
<dbReference type="RefSeq" id="WP_012208637.1">
    <property type="nucleotide sequence ID" value="NC_010003.1"/>
</dbReference>
<dbReference type="SMR" id="A9BHC5"/>
<dbReference type="STRING" id="403833.Pmob_0810"/>
<dbReference type="KEGG" id="pmo:Pmob_0810"/>
<dbReference type="eggNOG" id="COG0182">
    <property type="taxonomic scope" value="Bacteria"/>
</dbReference>
<dbReference type="HOGENOM" id="CLU_016218_1_2_0"/>
<dbReference type="OrthoDB" id="9803436at2"/>
<dbReference type="UniPathway" id="UPA00904">
    <property type="reaction ID" value="UER00874"/>
</dbReference>
<dbReference type="Proteomes" id="UP000000789">
    <property type="component" value="Chromosome"/>
</dbReference>
<dbReference type="GO" id="GO:0046523">
    <property type="term" value="F:S-methyl-5-thioribose-1-phosphate isomerase activity"/>
    <property type="evidence" value="ECO:0007669"/>
    <property type="project" value="UniProtKB-UniRule"/>
</dbReference>
<dbReference type="GO" id="GO:0019509">
    <property type="term" value="P:L-methionine salvage from methylthioadenosine"/>
    <property type="evidence" value="ECO:0007669"/>
    <property type="project" value="UniProtKB-UniRule"/>
</dbReference>
<dbReference type="FunFam" id="1.20.120.420:FF:000003">
    <property type="entry name" value="Methylthioribose-1-phosphate isomerase"/>
    <property type="match status" value="1"/>
</dbReference>
<dbReference type="FunFam" id="3.40.50.10470:FF:000006">
    <property type="entry name" value="Methylthioribose-1-phosphate isomerase"/>
    <property type="match status" value="1"/>
</dbReference>
<dbReference type="Gene3D" id="1.20.120.420">
    <property type="entry name" value="translation initiation factor eif-2b, domain 1"/>
    <property type="match status" value="1"/>
</dbReference>
<dbReference type="Gene3D" id="3.40.50.10470">
    <property type="entry name" value="Translation initiation factor eif-2b, domain 2"/>
    <property type="match status" value="1"/>
</dbReference>
<dbReference type="HAMAP" id="MF_01678">
    <property type="entry name" value="Salvage_MtnA"/>
    <property type="match status" value="1"/>
</dbReference>
<dbReference type="InterPro" id="IPR000649">
    <property type="entry name" value="IF-2B-related"/>
</dbReference>
<dbReference type="InterPro" id="IPR005251">
    <property type="entry name" value="IF-M1Pi"/>
</dbReference>
<dbReference type="InterPro" id="IPR042529">
    <property type="entry name" value="IF_2B-like_C"/>
</dbReference>
<dbReference type="InterPro" id="IPR011559">
    <property type="entry name" value="Initiation_fac_2B_a/b/d"/>
</dbReference>
<dbReference type="InterPro" id="IPR027363">
    <property type="entry name" value="M1Pi_N"/>
</dbReference>
<dbReference type="InterPro" id="IPR037171">
    <property type="entry name" value="NagB/RpiA_transferase-like"/>
</dbReference>
<dbReference type="NCBIfam" id="TIGR00524">
    <property type="entry name" value="eIF-2B_rel"/>
    <property type="match status" value="1"/>
</dbReference>
<dbReference type="NCBIfam" id="NF004326">
    <property type="entry name" value="PRK05720.1"/>
    <property type="match status" value="1"/>
</dbReference>
<dbReference type="NCBIfam" id="TIGR00512">
    <property type="entry name" value="salvage_mtnA"/>
    <property type="match status" value="1"/>
</dbReference>
<dbReference type="PANTHER" id="PTHR43475">
    <property type="entry name" value="METHYLTHIORIBOSE-1-PHOSPHATE ISOMERASE"/>
    <property type="match status" value="1"/>
</dbReference>
<dbReference type="PANTHER" id="PTHR43475:SF1">
    <property type="entry name" value="METHYLTHIORIBOSE-1-PHOSPHATE ISOMERASE"/>
    <property type="match status" value="1"/>
</dbReference>
<dbReference type="Pfam" id="PF01008">
    <property type="entry name" value="IF-2B"/>
    <property type="match status" value="1"/>
</dbReference>
<dbReference type="SUPFAM" id="SSF100950">
    <property type="entry name" value="NagB/RpiA/CoA transferase-like"/>
    <property type="match status" value="1"/>
</dbReference>